<feature type="signal peptide" evidence="4">
    <location>
        <begin position="1"/>
        <end position="25"/>
    </location>
</feature>
<feature type="chain" id="PRO_0000010385" description="Transmembrane emp24 domain-containing protein 3">
    <location>
        <begin position="26"/>
        <end position="221"/>
    </location>
</feature>
<feature type="topological domain" description="Lumenal" evidence="4">
    <location>
        <begin position="28"/>
        <end position="184"/>
    </location>
</feature>
<feature type="transmembrane region" description="Helical" evidence="4">
    <location>
        <begin position="185"/>
        <end position="205"/>
    </location>
</feature>
<feature type="topological domain" description="Cytoplasmic" evidence="4">
    <location>
        <begin position="206"/>
        <end position="221"/>
    </location>
</feature>
<feature type="domain" description="GOLD" evidence="5">
    <location>
        <begin position="42"/>
        <end position="124"/>
    </location>
</feature>
<feature type="short sequence motif" description="COPI vesicle coat-binding" evidence="4">
    <location>
        <begin position="208"/>
        <end position="221"/>
    </location>
</feature>
<feature type="short sequence motif" description="COPII vesicle coat-binding" evidence="4">
    <location>
        <begin position="208"/>
        <end position="209"/>
    </location>
</feature>
<feature type="modified residue" description="Dimethylated arginine" evidence="2">
    <location>
        <position position="103"/>
    </location>
</feature>
<feature type="sequence conflict" description="In Ref. 1; BAB23361." evidence="6" ref="1">
    <original>L</original>
    <variation>A</variation>
    <location>
        <position position="18"/>
    </location>
</feature>
<evidence type="ECO:0000250" key="1"/>
<evidence type="ECO:0000250" key="2">
    <source>
        <dbReference type="UniProtKB" id="Q6AY25"/>
    </source>
</evidence>
<evidence type="ECO:0000250" key="3">
    <source>
        <dbReference type="UniProtKB" id="Q9Y3Q3"/>
    </source>
</evidence>
<evidence type="ECO:0000255" key="4"/>
<evidence type="ECO:0000255" key="5">
    <source>
        <dbReference type="PROSITE-ProRule" id="PRU00096"/>
    </source>
</evidence>
<evidence type="ECO:0000305" key="6"/>
<comment type="function">
    <text evidence="1">Potential role in vesicular protein trafficking, mainly in the early secretory pathway. Contributes to the coupled localization of TMED2 and TMED10 in the cis-Golgi network (By similarity).</text>
</comment>
<comment type="subunit">
    <text evidence="1">Monomer in endoplasmic reticulum, endoplasmic reticulum-Golgi intermediate compartment and cis-Golgi network. Interacts (via C-terminus) with COPG1; the interaction involves dimeric TMED3; however, there are conflicting reports on the interaction. Interacts with GORASP1 and GORASP2 (By similarity).</text>
</comment>
<comment type="subcellular location">
    <subcellularLocation>
        <location evidence="3">Endoplasmic reticulum-Golgi intermediate compartment membrane</location>
        <topology evidence="4">Single-pass type I membrane protein</topology>
    </subcellularLocation>
    <subcellularLocation>
        <location evidence="3">Golgi apparatus</location>
        <location evidence="3">cis-Golgi network membrane</location>
        <topology evidence="4">Single-pass type I membrane protein</topology>
    </subcellularLocation>
    <subcellularLocation>
        <location evidence="2">Golgi apparatus</location>
        <location evidence="2">Golgi stack membrane</location>
        <topology evidence="4">Single-pass type I membrane protein</topology>
    </subcellularLocation>
    <subcellularLocation>
        <location evidence="3">Endoplasmic reticulum membrane</location>
        <topology evidence="4">Single-pass type I membrane protein</topology>
    </subcellularLocation>
    <subcellularLocation>
        <location evidence="3">Cytoplasmic vesicle</location>
        <location evidence="3">COPI-coated vesicle membrane</location>
        <topology evidence="4">Single-pass type I membrane protein</topology>
    </subcellularLocation>
    <text evidence="3">Probably cycles between compartments of the early secretatory pathway.</text>
</comment>
<comment type="similarity">
    <text evidence="6">Belongs to the EMP24/GP25L family.</text>
</comment>
<comment type="sequence caution" evidence="6">
    <conflict type="frameshift">
        <sequence resource="EMBL-CDS" id="BAB22292"/>
    </conflict>
</comment>
<dbReference type="EMBL" id="AK002698">
    <property type="protein sequence ID" value="BAB22292.1"/>
    <property type="status" value="ALT_FRAME"/>
    <property type="molecule type" value="mRNA"/>
</dbReference>
<dbReference type="EMBL" id="AK004545">
    <property type="protein sequence ID" value="BAB23361.1"/>
    <property type="molecule type" value="mRNA"/>
</dbReference>
<dbReference type="EMBL" id="BC023338">
    <property type="protein sequence ID" value="AAH23338.1"/>
    <property type="molecule type" value="mRNA"/>
</dbReference>
<dbReference type="CCDS" id="CCDS23396.1"/>
<dbReference type="RefSeq" id="NP_079636.2">
    <property type="nucleotide sequence ID" value="NM_025360.2"/>
</dbReference>
<dbReference type="SMR" id="Q78IS1"/>
<dbReference type="BioGRID" id="211221">
    <property type="interactions" value="2"/>
</dbReference>
<dbReference type="FunCoup" id="Q78IS1">
    <property type="interactions" value="1125"/>
</dbReference>
<dbReference type="STRING" id="10090.ENSMUSP00000058723"/>
<dbReference type="PhosphoSitePlus" id="Q78IS1"/>
<dbReference type="SwissPalm" id="Q78IS1"/>
<dbReference type="PaxDb" id="10090-ENSMUSP00000058723"/>
<dbReference type="PeptideAtlas" id="Q78IS1"/>
<dbReference type="ProteomicsDB" id="259575"/>
<dbReference type="Pumba" id="Q78IS1"/>
<dbReference type="Antibodypedia" id="27806">
    <property type="antibodies" value="152 antibodies from 21 providers"/>
</dbReference>
<dbReference type="DNASU" id="66111"/>
<dbReference type="Ensembl" id="ENSMUST00000058488.9">
    <property type="protein sequence ID" value="ENSMUSP00000058723.7"/>
    <property type="gene ID" value="ENSMUSG00000032353.10"/>
</dbReference>
<dbReference type="GeneID" id="66111"/>
<dbReference type="KEGG" id="mmu:66111"/>
<dbReference type="UCSC" id="uc009qzo.2">
    <property type="organism name" value="mouse"/>
</dbReference>
<dbReference type="AGR" id="MGI:1913361"/>
<dbReference type="CTD" id="23423"/>
<dbReference type="MGI" id="MGI:1913361">
    <property type="gene designation" value="Tmed3"/>
</dbReference>
<dbReference type="VEuPathDB" id="HostDB:ENSMUSG00000032353"/>
<dbReference type="eggNOG" id="KOG1693">
    <property type="taxonomic scope" value="Eukaryota"/>
</dbReference>
<dbReference type="GeneTree" id="ENSGT00940000159833"/>
<dbReference type="HOGENOM" id="CLU_066963_6_0_1"/>
<dbReference type="InParanoid" id="Q78IS1"/>
<dbReference type="OMA" id="NAEDCFY"/>
<dbReference type="OrthoDB" id="62956at2759"/>
<dbReference type="PhylomeDB" id="Q78IS1"/>
<dbReference type="TreeFam" id="TF313000"/>
<dbReference type="Reactome" id="R-MMU-6807878">
    <property type="pathway name" value="COPI-mediated anterograde transport"/>
</dbReference>
<dbReference type="Reactome" id="R-MMU-6811434">
    <property type="pathway name" value="COPI-dependent Golgi-to-ER retrograde traffic"/>
</dbReference>
<dbReference type="BioGRID-ORCS" id="66111">
    <property type="hits" value="1 hit in 77 CRISPR screens"/>
</dbReference>
<dbReference type="ChiTaRS" id="Tmed3">
    <property type="organism name" value="mouse"/>
</dbReference>
<dbReference type="PRO" id="PR:Q78IS1"/>
<dbReference type="Proteomes" id="UP000000589">
    <property type="component" value="Chromosome 9"/>
</dbReference>
<dbReference type="RNAct" id="Q78IS1">
    <property type="molecule type" value="protein"/>
</dbReference>
<dbReference type="Bgee" id="ENSMUSG00000032353">
    <property type="expression patterns" value="Expressed in prostate gland ventral lobe and 275 other cell types or tissues"/>
</dbReference>
<dbReference type="GO" id="GO:0030126">
    <property type="term" value="C:COPI vesicle coat"/>
    <property type="evidence" value="ECO:0000250"/>
    <property type="project" value="UniProtKB"/>
</dbReference>
<dbReference type="GO" id="GO:0005783">
    <property type="term" value="C:endoplasmic reticulum"/>
    <property type="evidence" value="ECO:0000250"/>
    <property type="project" value="UniProtKB"/>
</dbReference>
<dbReference type="GO" id="GO:0005789">
    <property type="term" value="C:endoplasmic reticulum membrane"/>
    <property type="evidence" value="ECO:0007669"/>
    <property type="project" value="UniProtKB-SubCell"/>
</dbReference>
<dbReference type="GO" id="GO:0005793">
    <property type="term" value="C:endoplasmic reticulum-Golgi intermediate compartment"/>
    <property type="evidence" value="ECO:0000250"/>
    <property type="project" value="UniProtKB"/>
</dbReference>
<dbReference type="GO" id="GO:0033116">
    <property type="term" value="C:endoplasmic reticulum-Golgi intermediate compartment membrane"/>
    <property type="evidence" value="ECO:0007669"/>
    <property type="project" value="UniProtKB-SubCell"/>
</dbReference>
<dbReference type="GO" id="GO:0005794">
    <property type="term" value="C:Golgi apparatus"/>
    <property type="evidence" value="ECO:0000250"/>
    <property type="project" value="UniProtKB"/>
</dbReference>
<dbReference type="GO" id="GO:0032580">
    <property type="term" value="C:Golgi cisterna membrane"/>
    <property type="evidence" value="ECO:0007669"/>
    <property type="project" value="UniProtKB-SubCell"/>
</dbReference>
<dbReference type="GO" id="GO:0015031">
    <property type="term" value="P:protein transport"/>
    <property type="evidence" value="ECO:0007669"/>
    <property type="project" value="UniProtKB-KW"/>
</dbReference>
<dbReference type="Gene3D" id="2.60.120.680">
    <property type="entry name" value="GOLD domain"/>
    <property type="match status" value="1"/>
</dbReference>
<dbReference type="InterPro" id="IPR015720">
    <property type="entry name" value="Emp24-like"/>
</dbReference>
<dbReference type="InterPro" id="IPR009038">
    <property type="entry name" value="GOLD_dom"/>
</dbReference>
<dbReference type="InterPro" id="IPR036598">
    <property type="entry name" value="GOLD_dom_sf"/>
</dbReference>
<dbReference type="PANTHER" id="PTHR22811">
    <property type="entry name" value="TRANSMEMBRANE EMP24 DOMAIN-CONTAINING PROTEIN"/>
    <property type="match status" value="1"/>
</dbReference>
<dbReference type="Pfam" id="PF01105">
    <property type="entry name" value="EMP24_GP25L"/>
    <property type="match status" value="1"/>
</dbReference>
<dbReference type="SMART" id="SM01190">
    <property type="entry name" value="EMP24_GP25L"/>
    <property type="match status" value="1"/>
</dbReference>
<dbReference type="SUPFAM" id="SSF101576">
    <property type="entry name" value="Supernatant protein factor (SPF), C-terminal domain"/>
    <property type="match status" value="1"/>
</dbReference>
<dbReference type="PROSITE" id="PS50866">
    <property type="entry name" value="GOLD"/>
    <property type="match status" value="1"/>
</dbReference>
<protein>
    <recommendedName>
        <fullName>Transmembrane emp24 domain-containing protein 3</fullName>
    </recommendedName>
    <alternativeName>
        <fullName>p24 family protein gamma-4</fullName>
        <shortName>p24gamma4</shortName>
    </alternativeName>
</protein>
<accession>Q78IS1</accession>
<accession>Q9DC62</accession>
<accession>Q9DCK9</accession>
<organism>
    <name type="scientific">Mus musculus</name>
    <name type="common">Mouse</name>
    <dbReference type="NCBI Taxonomy" id="10090"/>
    <lineage>
        <taxon>Eukaryota</taxon>
        <taxon>Metazoa</taxon>
        <taxon>Chordata</taxon>
        <taxon>Craniata</taxon>
        <taxon>Vertebrata</taxon>
        <taxon>Euteleostomi</taxon>
        <taxon>Mammalia</taxon>
        <taxon>Eutheria</taxon>
        <taxon>Euarchontoglires</taxon>
        <taxon>Glires</taxon>
        <taxon>Rodentia</taxon>
        <taxon>Myomorpha</taxon>
        <taxon>Muroidea</taxon>
        <taxon>Muridae</taxon>
        <taxon>Murinae</taxon>
        <taxon>Mus</taxon>
        <taxon>Mus</taxon>
    </lineage>
</organism>
<gene>
    <name type="primary">Tmed3</name>
</gene>
<sequence>MVHEAPHASSFQMLLQLLLLLLLRAEPLRSAELTFELPDNAKQCFHEEVEQGVKFSLDYQVITGGHYDVDCYVEDPRGNVIYRETKKQYDSFTYKTEAKGVYRFCFSNEFSTFSHKTVYFDFQVGDEPPILPDMGNRVTALTQMESACVTIHEALKTVIDSQTHYRLREAQDRARAEDLNSRVSYWSVGETIALFVVSFSQVLLLKSFFTEKRPVNRAVHS</sequence>
<reference key="1">
    <citation type="journal article" date="2005" name="Science">
        <title>The transcriptional landscape of the mammalian genome.</title>
        <authorList>
            <person name="Carninci P."/>
            <person name="Kasukawa T."/>
            <person name="Katayama S."/>
            <person name="Gough J."/>
            <person name="Frith M.C."/>
            <person name="Maeda N."/>
            <person name="Oyama R."/>
            <person name="Ravasi T."/>
            <person name="Lenhard B."/>
            <person name="Wells C."/>
            <person name="Kodzius R."/>
            <person name="Shimokawa K."/>
            <person name="Bajic V.B."/>
            <person name="Brenner S.E."/>
            <person name="Batalov S."/>
            <person name="Forrest A.R."/>
            <person name="Zavolan M."/>
            <person name="Davis M.J."/>
            <person name="Wilming L.G."/>
            <person name="Aidinis V."/>
            <person name="Allen J.E."/>
            <person name="Ambesi-Impiombato A."/>
            <person name="Apweiler R."/>
            <person name="Aturaliya R.N."/>
            <person name="Bailey T.L."/>
            <person name="Bansal M."/>
            <person name="Baxter L."/>
            <person name="Beisel K.W."/>
            <person name="Bersano T."/>
            <person name="Bono H."/>
            <person name="Chalk A.M."/>
            <person name="Chiu K.P."/>
            <person name="Choudhary V."/>
            <person name="Christoffels A."/>
            <person name="Clutterbuck D.R."/>
            <person name="Crowe M.L."/>
            <person name="Dalla E."/>
            <person name="Dalrymple B.P."/>
            <person name="de Bono B."/>
            <person name="Della Gatta G."/>
            <person name="di Bernardo D."/>
            <person name="Down T."/>
            <person name="Engstrom P."/>
            <person name="Fagiolini M."/>
            <person name="Faulkner G."/>
            <person name="Fletcher C.F."/>
            <person name="Fukushima T."/>
            <person name="Furuno M."/>
            <person name="Futaki S."/>
            <person name="Gariboldi M."/>
            <person name="Georgii-Hemming P."/>
            <person name="Gingeras T.R."/>
            <person name="Gojobori T."/>
            <person name="Green R.E."/>
            <person name="Gustincich S."/>
            <person name="Harbers M."/>
            <person name="Hayashi Y."/>
            <person name="Hensch T.K."/>
            <person name="Hirokawa N."/>
            <person name="Hill D."/>
            <person name="Huminiecki L."/>
            <person name="Iacono M."/>
            <person name="Ikeo K."/>
            <person name="Iwama A."/>
            <person name="Ishikawa T."/>
            <person name="Jakt M."/>
            <person name="Kanapin A."/>
            <person name="Katoh M."/>
            <person name="Kawasawa Y."/>
            <person name="Kelso J."/>
            <person name="Kitamura H."/>
            <person name="Kitano H."/>
            <person name="Kollias G."/>
            <person name="Krishnan S.P."/>
            <person name="Kruger A."/>
            <person name="Kummerfeld S.K."/>
            <person name="Kurochkin I.V."/>
            <person name="Lareau L.F."/>
            <person name="Lazarevic D."/>
            <person name="Lipovich L."/>
            <person name="Liu J."/>
            <person name="Liuni S."/>
            <person name="McWilliam S."/>
            <person name="Madan Babu M."/>
            <person name="Madera M."/>
            <person name="Marchionni L."/>
            <person name="Matsuda H."/>
            <person name="Matsuzawa S."/>
            <person name="Miki H."/>
            <person name="Mignone F."/>
            <person name="Miyake S."/>
            <person name="Morris K."/>
            <person name="Mottagui-Tabar S."/>
            <person name="Mulder N."/>
            <person name="Nakano N."/>
            <person name="Nakauchi H."/>
            <person name="Ng P."/>
            <person name="Nilsson R."/>
            <person name="Nishiguchi S."/>
            <person name="Nishikawa S."/>
            <person name="Nori F."/>
            <person name="Ohara O."/>
            <person name="Okazaki Y."/>
            <person name="Orlando V."/>
            <person name="Pang K.C."/>
            <person name="Pavan W.J."/>
            <person name="Pavesi G."/>
            <person name="Pesole G."/>
            <person name="Petrovsky N."/>
            <person name="Piazza S."/>
            <person name="Reed J."/>
            <person name="Reid J.F."/>
            <person name="Ring B.Z."/>
            <person name="Ringwald M."/>
            <person name="Rost B."/>
            <person name="Ruan Y."/>
            <person name="Salzberg S.L."/>
            <person name="Sandelin A."/>
            <person name="Schneider C."/>
            <person name="Schoenbach C."/>
            <person name="Sekiguchi K."/>
            <person name="Semple C.A."/>
            <person name="Seno S."/>
            <person name="Sessa L."/>
            <person name="Sheng Y."/>
            <person name="Shibata Y."/>
            <person name="Shimada H."/>
            <person name="Shimada K."/>
            <person name="Silva D."/>
            <person name="Sinclair B."/>
            <person name="Sperling S."/>
            <person name="Stupka E."/>
            <person name="Sugiura K."/>
            <person name="Sultana R."/>
            <person name="Takenaka Y."/>
            <person name="Taki K."/>
            <person name="Tammoja K."/>
            <person name="Tan S.L."/>
            <person name="Tang S."/>
            <person name="Taylor M.S."/>
            <person name="Tegner J."/>
            <person name="Teichmann S.A."/>
            <person name="Ueda H.R."/>
            <person name="van Nimwegen E."/>
            <person name="Verardo R."/>
            <person name="Wei C.L."/>
            <person name="Yagi K."/>
            <person name="Yamanishi H."/>
            <person name="Zabarovsky E."/>
            <person name="Zhu S."/>
            <person name="Zimmer A."/>
            <person name="Hide W."/>
            <person name="Bult C."/>
            <person name="Grimmond S.M."/>
            <person name="Teasdale R.D."/>
            <person name="Liu E.T."/>
            <person name="Brusic V."/>
            <person name="Quackenbush J."/>
            <person name="Wahlestedt C."/>
            <person name="Mattick J.S."/>
            <person name="Hume D.A."/>
            <person name="Kai C."/>
            <person name="Sasaki D."/>
            <person name="Tomaru Y."/>
            <person name="Fukuda S."/>
            <person name="Kanamori-Katayama M."/>
            <person name="Suzuki M."/>
            <person name="Aoki J."/>
            <person name="Arakawa T."/>
            <person name="Iida J."/>
            <person name="Imamura K."/>
            <person name="Itoh M."/>
            <person name="Kato T."/>
            <person name="Kawaji H."/>
            <person name="Kawagashira N."/>
            <person name="Kawashima T."/>
            <person name="Kojima M."/>
            <person name="Kondo S."/>
            <person name="Konno H."/>
            <person name="Nakano K."/>
            <person name="Ninomiya N."/>
            <person name="Nishio T."/>
            <person name="Okada M."/>
            <person name="Plessy C."/>
            <person name="Shibata K."/>
            <person name="Shiraki T."/>
            <person name="Suzuki S."/>
            <person name="Tagami M."/>
            <person name="Waki K."/>
            <person name="Watahiki A."/>
            <person name="Okamura-Oho Y."/>
            <person name="Suzuki H."/>
            <person name="Kawai J."/>
            <person name="Hayashizaki Y."/>
        </authorList>
    </citation>
    <scope>NUCLEOTIDE SEQUENCE [LARGE SCALE MRNA]</scope>
    <source>
        <strain>C57BL/6J</strain>
        <tissue>Kidney</tissue>
        <tissue>Lung</tissue>
    </source>
</reference>
<reference key="2">
    <citation type="journal article" date="2004" name="Genome Res.">
        <title>The status, quality, and expansion of the NIH full-length cDNA project: the Mammalian Gene Collection (MGC).</title>
        <authorList>
            <consortium name="The MGC Project Team"/>
        </authorList>
    </citation>
    <scope>NUCLEOTIDE SEQUENCE [LARGE SCALE MRNA]</scope>
    <source>
        <strain>FVB/N</strain>
        <tissue>Mammary tumor</tissue>
    </source>
</reference>
<reference key="3">
    <citation type="journal article" date="2010" name="Cell">
        <title>A tissue-specific atlas of mouse protein phosphorylation and expression.</title>
        <authorList>
            <person name="Huttlin E.L."/>
            <person name="Jedrychowski M.P."/>
            <person name="Elias J.E."/>
            <person name="Goswami T."/>
            <person name="Rad R."/>
            <person name="Beausoleil S.A."/>
            <person name="Villen J."/>
            <person name="Haas W."/>
            <person name="Sowa M.E."/>
            <person name="Gygi S.P."/>
        </authorList>
    </citation>
    <scope>IDENTIFICATION BY MASS SPECTROMETRY [LARGE SCALE ANALYSIS]</scope>
    <source>
        <tissue>Heart</tissue>
        <tissue>Liver</tissue>
        <tissue>Lung</tissue>
        <tissue>Pancreas</tissue>
        <tissue>Spleen</tissue>
        <tissue>Testis</tissue>
    </source>
</reference>
<proteinExistence type="evidence at protein level"/>
<keyword id="KW-0968">Cytoplasmic vesicle</keyword>
<keyword id="KW-0256">Endoplasmic reticulum</keyword>
<keyword id="KW-0333">Golgi apparatus</keyword>
<keyword id="KW-0472">Membrane</keyword>
<keyword id="KW-0488">Methylation</keyword>
<keyword id="KW-0653">Protein transport</keyword>
<keyword id="KW-1185">Reference proteome</keyword>
<keyword id="KW-0732">Signal</keyword>
<keyword id="KW-0812">Transmembrane</keyword>
<keyword id="KW-1133">Transmembrane helix</keyword>
<keyword id="KW-0813">Transport</keyword>
<name>TMED3_MOUSE</name>